<comment type="similarity">
    <text evidence="1">Belongs to the UPF0145 family.</text>
</comment>
<evidence type="ECO:0000255" key="1">
    <source>
        <dbReference type="HAMAP-Rule" id="MF_00338"/>
    </source>
</evidence>
<gene>
    <name type="ordered locus">BURPS668_1644</name>
</gene>
<proteinExistence type="inferred from homology"/>
<dbReference type="EMBL" id="CP000570">
    <property type="protein sequence ID" value="ABN83598.1"/>
    <property type="molecule type" value="Genomic_DNA"/>
</dbReference>
<dbReference type="RefSeq" id="WP_004193399.1">
    <property type="nucleotide sequence ID" value="NC_009074.1"/>
</dbReference>
<dbReference type="SMR" id="A3N8L4"/>
<dbReference type="KEGG" id="bpd:BURPS668_1644"/>
<dbReference type="HOGENOM" id="CLU_117144_1_1_4"/>
<dbReference type="Gene3D" id="3.30.110.70">
    <property type="entry name" value="Hypothetical protein apc22750. Chain B"/>
    <property type="match status" value="1"/>
</dbReference>
<dbReference type="HAMAP" id="MF_00338">
    <property type="entry name" value="UPF0145"/>
    <property type="match status" value="1"/>
</dbReference>
<dbReference type="InterPro" id="IPR035439">
    <property type="entry name" value="UPF0145_dom_sf"/>
</dbReference>
<dbReference type="InterPro" id="IPR002765">
    <property type="entry name" value="UPF0145_YbjQ-like"/>
</dbReference>
<dbReference type="PANTHER" id="PTHR34068:SF2">
    <property type="entry name" value="UPF0145 PROTEIN SCO3412"/>
    <property type="match status" value="1"/>
</dbReference>
<dbReference type="PANTHER" id="PTHR34068">
    <property type="entry name" value="UPF0145 PROTEIN YBJQ"/>
    <property type="match status" value="1"/>
</dbReference>
<dbReference type="Pfam" id="PF01906">
    <property type="entry name" value="YbjQ_1"/>
    <property type="match status" value="1"/>
</dbReference>
<dbReference type="SUPFAM" id="SSF117782">
    <property type="entry name" value="YbjQ-like"/>
    <property type="match status" value="1"/>
</dbReference>
<accession>A3N8L4</accession>
<name>Y1644_BURP6</name>
<sequence length="111" mass="11953">MADPQLITTAFDIPGYRIERSLGVARGIVVRSRSIVGTFGASIQTLFGGNISLYTSLCERARQDAYERMIDEARRMGGNAIVGMRYDATEIASGVTEVLCYGTAVQAVRAG</sequence>
<organism>
    <name type="scientific">Burkholderia pseudomallei (strain 668)</name>
    <dbReference type="NCBI Taxonomy" id="320373"/>
    <lineage>
        <taxon>Bacteria</taxon>
        <taxon>Pseudomonadati</taxon>
        <taxon>Pseudomonadota</taxon>
        <taxon>Betaproteobacteria</taxon>
        <taxon>Burkholderiales</taxon>
        <taxon>Burkholderiaceae</taxon>
        <taxon>Burkholderia</taxon>
        <taxon>pseudomallei group</taxon>
    </lineage>
</organism>
<feature type="chain" id="PRO_1000012983" description="UPF0145 protein BURPS668_1644">
    <location>
        <begin position="1"/>
        <end position="111"/>
    </location>
</feature>
<reference key="1">
    <citation type="journal article" date="2010" name="Genome Biol. Evol.">
        <title>Continuing evolution of Burkholderia mallei through genome reduction and large-scale rearrangements.</title>
        <authorList>
            <person name="Losada L."/>
            <person name="Ronning C.M."/>
            <person name="DeShazer D."/>
            <person name="Woods D."/>
            <person name="Fedorova N."/>
            <person name="Kim H.S."/>
            <person name="Shabalina S.A."/>
            <person name="Pearson T.R."/>
            <person name="Brinkac L."/>
            <person name="Tan P."/>
            <person name="Nandi T."/>
            <person name="Crabtree J."/>
            <person name="Badger J."/>
            <person name="Beckstrom-Sternberg S."/>
            <person name="Saqib M."/>
            <person name="Schutzer S.E."/>
            <person name="Keim P."/>
            <person name="Nierman W.C."/>
        </authorList>
    </citation>
    <scope>NUCLEOTIDE SEQUENCE [LARGE SCALE GENOMIC DNA]</scope>
    <source>
        <strain>668</strain>
    </source>
</reference>
<protein>
    <recommendedName>
        <fullName evidence="1">UPF0145 protein BURPS668_1644</fullName>
    </recommendedName>
</protein>